<accession>P22144</accession>
<accession>A3GIB4</accession>
<accession>Q549G5</accession>
<feature type="chain" id="PRO_0000160883" description="D-xylulose reductase">
    <location>
        <begin position="1"/>
        <end position="363"/>
    </location>
</feature>
<feature type="binding site" evidence="1">
    <location>
        <position position="41"/>
    </location>
    <ligand>
        <name>Zn(2+)</name>
        <dbReference type="ChEBI" id="CHEBI:29105"/>
        <note>catalytic</note>
    </ligand>
</feature>
<feature type="binding site" evidence="1">
    <location>
        <position position="66"/>
    </location>
    <ligand>
        <name>Zn(2+)</name>
        <dbReference type="ChEBI" id="CHEBI:29105"/>
        <note>catalytic</note>
    </ligand>
</feature>
<feature type="binding site" evidence="1">
    <location>
        <position position="159"/>
    </location>
    <ligand>
        <name>Zn(2+)</name>
        <dbReference type="ChEBI" id="CHEBI:29105"/>
        <note>catalytic</note>
    </ligand>
</feature>
<feature type="binding site" evidence="2">
    <location>
        <begin position="183"/>
        <end position="188"/>
    </location>
    <ligand>
        <name>NAD(+)</name>
        <dbReference type="ChEBI" id="CHEBI:57540"/>
    </ligand>
</feature>
<feature type="strand" evidence="4">
    <location>
        <begin position="3"/>
        <end position="11"/>
    </location>
</feature>
<feature type="strand" evidence="4">
    <location>
        <begin position="14"/>
        <end position="21"/>
    </location>
</feature>
<feature type="strand" evidence="4">
    <location>
        <begin position="30"/>
        <end position="38"/>
    </location>
</feature>
<feature type="helix" evidence="4">
    <location>
        <begin position="42"/>
        <end position="50"/>
    </location>
</feature>
<feature type="strand" evidence="4">
    <location>
        <begin position="51"/>
        <end position="53"/>
    </location>
</feature>
<feature type="strand" evidence="4">
    <location>
        <begin position="67"/>
        <end position="75"/>
    </location>
</feature>
<feature type="strand" evidence="4">
    <location>
        <begin position="87"/>
        <end position="90"/>
    </location>
</feature>
<feature type="strand" evidence="4">
    <location>
        <begin position="97"/>
        <end position="99"/>
    </location>
</feature>
<feature type="helix" evidence="4">
    <location>
        <begin position="100"/>
        <end position="103"/>
    </location>
</feature>
<feature type="helix" evidence="4">
    <location>
        <begin position="107"/>
        <end position="109"/>
    </location>
</feature>
<feature type="strand" evidence="4">
    <location>
        <begin position="131"/>
        <end position="139"/>
    </location>
</feature>
<feature type="helix" evidence="4">
    <location>
        <begin position="140"/>
        <end position="142"/>
    </location>
</feature>
<feature type="strand" evidence="4">
    <location>
        <begin position="143"/>
        <end position="145"/>
    </location>
</feature>
<feature type="helix" evidence="4">
    <location>
        <begin position="152"/>
        <end position="170"/>
    </location>
</feature>
<feature type="strand" evidence="4">
    <location>
        <begin position="178"/>
        <end position="182"/>
    </location>
</feature>
<feature type="helix" evidence="4">
    <location>
        <begin position="186"/>
        <end position="197"/>
    </location>
</feature>
<feature type="strand" evidence="4">
    <location>
        <begin position="201"/>
        <end position="208"/>
    </location>
</feature>
<feature type="helix" evidence="4">
    <location>
        <begin position="210"/>
        <end position="218"/>
    </location>
</feature>
<feature type="strand" evidence="4">
    <location>
        <begin position="223"/>
        <end position="227"/>
    </location>
</feature>
<feature type="helix" evidence="4">
    <location>
        <begin position="233"/>
        <end position="239"/>
    </location>
</feature>
<feature type="turn" evidence="4">
    <location>
        <begin position="240"/>
        <end position="242"/>
    </location>
</feature>
<feature type="strand" evidence="4">
    <location>
        <begin position="246"/>
        <end position="250"/>
    </location>
</feature>
<feature type="helix" evidence="4">
    <location>
        <begin position="255"/>
        <end position="264"/>
    </location>
</feature>
<feature type="strand" evidence="4">
    <location>
        <begin position="270"/>
        <end position="273"/>
    </location>
</feature>
<feature type="helix" evidence="4">
    <location>
        <begin position="285"/>
        <end position="290"/>
    </location>
</feature>
<feature type="strand" evidence="4">
    <location>
        <begin position="294"/>
        <end position="297"/>
    </location>
</feature>
<feature type="helix" evidence="4">
    <location>
        <begin position="305"/>
        <end position="317"/>
    </location>
</feature>
<feature type="helix" evidence="4">
    <location>
        <begin position="321"/>
        <end position="323"/>
    </location>
</feature>
<feature type="helix" evidence="4">
    <location>
        <begin position="328"/>
        <end position="331"/>
    </location>
</feature>
<feature type="strand" evidence="4">
    <location>
        <begin position="334"/>
        <end position="336"/>
    </location>
</feature>
<feature type="helix" evidence="4">
    <location>
        <begin position="341"/>
        <end position="350"/>
    </location>
</feature>
<feature type="strand" evidence="4">
    <location>
        <begin position="357"/>
        <end position="360"/>
    </location>
</feature>
<proteinExistence type="evidence at protein level"/>
<name>XYL2_PICST</name>
<evidence type="ECO:0000250" key="1"/>
<evidence type="ECO:0000255" key="2"/>
<evidence type="ECO:0000305" key="3"/>
<evidence type="ECO:0007829" key="4">
    <source>
        <dbReference type="PDB" id="7Y9P"/>
    </source>
</evidence>
<reference key="1">
    <citation type="journal article" date="1990" name="Curr. Genet.">
        <title>Isolation and characterization of the Pichia stipitis xylitol dehydrogenase gene, XYL2, and construction of a xylose-utilizing Saccharomyces cerevisiae transformant.</title>
        <authorList>
            <person name="Koetter P."/>
            <person name="Amore R."/>
            <person name="Hollenberg C.P."/>
            <person name="Ciriacy M."/>
        </authorList>
    </citation>
    <scope>NUCLEOTIDE SEQUENCE [GENOMIC DNA]</scope>
    <source>
        <strain>ATCC 62970 / CBS 5774 / NRRL Y-11542</strain>
    </source>
</reference>
<reference key="2">
    <citation type="journal article" date="2000" name="Appl. Biochem. Biotechnol.">
        <title>Characterization and complementation of a Pichia stipitis mutant unable to grow on D-xylose or L-arabinose.</title>
        <authorList>
            <person name="Shi N.-Q."/>
            <person name="Prahl K."/>
            <person name="Hendrick J."/>
            <person name="Cruz J."/>
            <person name="Lu P."/>
            <person name="Cho J.-Y."/>
            <person name="Jones S."/>
            <person name="Jeffries T.W."/>
        </authorList>
    </citation>
    <scope>NUCLEOTIDE SEQUENCE [GENOMIC DNA]</scope>
    <source>
        <strain>ATCC 58785 / CBS 6054 / NBRC 10063 / NRRL Y-11545</strain>
    </source>
</reference>
<reference key="3">
    <citation type="journal article" date="2007" name="Nat. Biotechnol.">
        <title>Genome sequence of the lignocellulose-bioconverting and xylose-fermenting yeast Pichia stipitis.</title>
        <authorList>
            <person name="Jeffries T.W."/>
            <person name="Grigoriev I.V."/>
            <person name="Grimwood J."/>
            <person name="Laplaza J.M."/>
            <person name="Aerts A."/>
            <person name="Salamov A."/>
            <person name="Schmutz J."/>
            <person name="Lindquist E."/>
            <person name="Dehal P."/>
            <person name="Shapiro H."/>
            <person name="Jin Y.-S."/>
            <person name="Passoth V."/>
            <person name="Richardson P.M."/>
        </authorList>
    </citation>
    <scope>NUCLEOTIDE SEQUENCE [LARGE SCALE GENOMIC DNA]</scope>
    <source>
        <strain>ATCC 58785 / CBS 6054 / NBRC 10063 / NRRL Y-11545</strain>
    </source>
</reference>
<reference key="4">
    <citation type="journal article" date="1993" name="FEBS Lett.">
        <title>Dual relationships of xylitol and alcohol dehydrogenases in families of two protein types.</title>
        <authorList>
            <person name="Persson B."/>
            <person name="Hallborn J."/>
            <person name="Walfridsson M."/>
            <person name="Hahn-Haegerdal B."/>
            <person name="Keraenen S."/>
            <person name="Penttilae M."/>
            <person name="Joernvall H."/>
        </authorList>
    </citation>
    <scope>SIMILARITY TO OTHER ZINC-ALCOHOL DEHYDROGENASES</scope>
</reference>
<protein>
    <recommendedName>
        <fullName>D-xylulose reductase</fullName>
        <ecNumber>1.1.1.9</ecNumber>
    </recommendedName>
    <alternativeName>
        <fullName>Xylitol dehydrogenase</fullName>
        <shortName>XDH</shortName>
    </alternativeName>
</protein>
<dbReference type="EC" id="1.1.1.9"/>
<dbReference type="EMBL" id="X55392">
    <property type="protein sequence ID" value="CAA39066.1"/>
    <property type="molecule type" value="Genomic_DNA"/>
</dbReference>
<dbReference type="EMBL" id="AF127801">
    <property type="protein sequence ID" value="AAD28251.1"/>
    <property type="molecule type" value="Genomic_DNA"/>
</dbReference>
<dbReference type="EMBL" id="AAVQ01000002">
    <property type="protein sequence ID" value="EAZ62959.1"/>
    <property type="molecule type" value="Genomic_DNA"/>
</dbReference>
<dbReference type="PIR" id="S13529">
    <property type="entry name" value="S13529"/>
</dbReference>
<dbReference type="RefSeq" id="XP_001386982.1">
    <property type="nucleotide sequence ID" value="XM_001386945.1"/>
</dbReference>
<dbReference type="PDB" id="7Y9P">
    <property type="method" value="X-ray"/>
    <property type="resolution" value="2.80 A"/>
    <property type="chains" value="A=2-363"/>
</dbReference>
<dbReference type="PDBsum" id="7Y9P"/>
<dbReference type="SMR" id="P22144"/>
<dbReference type="FunCoup" id="P22144">
    <property type="interactions" value="568"/>
</dbReference>
<dbReference type="STRING" id="322104.P22144"/>
<dbReference type="GeneID" id="4852013"/>
<dbReference type="KEGG" id="pic:PICST_86924"/>
<dbReference type="eggNOG" id="KOG0024">
    <property type="taxonomic scope" value="Eukaryota"/>
</dbReference>
<dbReference type="HOGENOM" id="CLU_026673_11_5_1"/>
<dbReference type="InParanoid" id="P22144"/>
<dbReference type="OMA" id="CSVGRPN"/>
<dbReference type="OrthoDB" id="3941538at2759"/>
<dbReference type="BRENDA" id="1.1.1.9">
    <property type="organism ID" value="4832"/>
</dbReference>
<dbReference type="BRENDA" id="1.1.1.B19">
    <property type="organism ID" value="4832"/>
</dbReference>
<dbReference type="UniPathway" id="UPA00146">
    <property type="reaction ID" value="UER00577"/>
</dbReference>
<dbReference type="Proteomes" id="UP000002258">
    <property type="component" value="Chromosome 1"/>
</dbReference>
<dbReference type="GO" id="GO:0046526">
    <property type="term" value="F:D-xylulose reductase activity"/>
    <property type="evidence" value="ECO:0007669"/>
    <property type="project" value="UniProtKB-EC"/>
</dbReference>
<dbReference type="GO" id="GO:0003939">
    <property type="term" value="F:L-iditol 2-dehydrogenase (NAD+) activity"/>
    <property type="evidence" value="ECO:0007669"/>
    <property type="project" value="TreeGrafter"/>
</dbReference>
<dbReference type="GO" id="GO:0008270">
    <property type="term" value="F:zinc ion binding"/>
    <property type="evidence" value="ECO:0007669"/>
    <property type="project" value="InterPro"/>
</dbReference>
<dbReference type="GO" id="GO:0042732">
    <property type="term" value="P:D-xylose metabolic process"/>
    <property type="evidence" value="ECO:0007669"/>
    <property type="project" value="UniProtKB-KW"/>
</dbReference>
<dbReference type="GO" id="GO:0019569">
    <property type="term" value="P:L-arabinose catabolic process to xylulose 5-phosphate"/>
    <property type="evidence" value="ECO:0007669"/>
    <property type="project" value="UniProtKB-UniPathway"/>
</dbReference>
<dbReference type="GO" id="GO:0006062">
    <property type="term" value="P:sorbitol catabolic process"/>
    <property type="evidence" value="ECO:0007669"/>
    <property type="project" value="TreeGrafter"/>
</dbReference>
<dbReference type="CDD" id="cd05285">
    <property type="entry name" value="sorbitol_DH"/>
    <property type="match status" value="1"/>
</dbReference>
<dbReference type="FunFam" id="3.40.50.720:FF:000068">
    <property type="entry name" value="Sorbitol dehydrogenase"/>
    <property type="match status" value="1"/>
</dbReference>
<dbReference type="Gene3D" id="3.90.180.10">
    <property type="entry name" value="Medium-chain alcohol dehydrogenases, catalytic domain"/>
    <property type="match status" value="1"/>
</dbReference>
<dbReference type="Gene3D" id="3.40.50.720">
    <property type="entry name" value="NAD(P)-binding Rossmann-like Domain"/>
    <property type="match status" value="1"/>
</dbReference>
<dbReference type="InterPro" id="IPR013149">
    <property type="entry name" value="ADH-like_C"/>
</dbReference>
<dbReference type="InterPro" id="IPR013154">
    <property type="entry name" value="ADH-like_N"/>
</dbReference>
<dbReference type="InterPro" id="IPR002328">
    <property type="entry name" value="ADH_Zn_CS"/>
</dbReference>
<dbReference type="InterPro" id="IPR011032">
    <property type="entry name" value="GroES-like_sf"/>
</dbReference>
<dbReference type="InterPro" id="IPR036291">
    <property type="entry name" value="NAD(P)-bd_dom_sf"/>
</dbReference>
<dbReference type="InterPro" id="IPR020843">
    <property type="entry name" value="PKS_ER"/>
</dbReference>
<dbReference type="InterPro" id="IPR045306">
    <property type="entry name" value="SDH-like"/>
</dbReference>
<dbReference type="PANTHER" id="PTHR43161">
    <property type="entry name" value="SORBITOL DEHYDROGENASE"/>
    <property type="match status" value="1"/>
</dbReference>
<dbReference type="PANTHER" id="PTHR43161:SF9">
    <property type="entry name" value="SORBITOL DEHYDROGENASE"/>
    <property type="match status" value="1"/>
</dbReference>
<dbReference type="Pfam" id="PF08240">
    <property type="entry name" value="ADH_N"/>
    <property type="match status" value="1"/>
</dbReference>
<dbReference type="Pfam" id="PF00107">
    <property type="entry name" value="ADH_zinc_N"/>
    <property type="match status" value="1"/>
</dbReference>
<dbReference type="SMART" id="SM00829">
    <property type="entry name" value="PKS_ER"/>
    <property type="match status" value="1"/>
</dbReference>
<dbReference type="SUPFAM" id="SSF50129">
    <property type="entry name" value="GroES-like"/>
    <property type="match status" value="1"/>
</dbReference>
<dbReference type="SUPFAM" id="SSF51735">
    <property type="entry name" value="NAD(P)-binding Rossmann-fold domains"/>
    <property type="match status" value="1"/>
</dbReference>
<dbReference type="PROSITE" id="PS00059">
    <property type="entry name" value="ADH_ZINC"/>
    <property type="match status" value="1"/>
</dbReference>
<organism>
    <name type="scientific">Scheffersomyces stipitis (strain ATCC 58785 / CBS 6054 / NBRC 10063 / NRRL Y-11545)</name>
    <name type="common">Yeast</name>
    <name type="synonym">Pichia stipitis</name>
    <dbReference type="NCBI Taxonomy" id="322104"/>
    <lineage>
        <taxon>Eukaryota</taxon>
        <taxon>Fungi</taxon>
        <taxon>Dikarya</taxon>
        <taxon>Ascomycota</taxon>
        <taxon>Saccharomycotina</taxon>
        <taxon>Pichiomycetes</taxon>
        <taxon>Debaryomycetaceae</taxon>
        <taxon>Scheffersomyces</taxon>
    </lineage>
</organism>
<sequence length="363" mass="38521">MTANPSLVLNKIDDISFETYDAPEISEPTDVLVQVKKTGICGSDIHFYAHGRIGNFVLTKPMVLGHESAGTVVQVGKGVTSLKVGDNVAIEPGIPSRFSDEYKSGHYNLCPHMAFAATPNSKEGEPNPPGTLCKYFKSPEDFLVKLPDHVSLELGALVEPLSVGVHASKLGSVAFGDYVAVFGAGPVGLLAAAVAKTFGAKGVIVVDIFDNKLKMAKDIGAATHTFNSKTGGSEELIKAFGGNVPNVVLECTGAEPCIKLGVDAIAPGGRFVQVGNAAGPVSFPITVFAMKELTLFGSFRYGFNDYKTAVGIFDTNYQNGRENAPIDFEQLITHRYKFKDAIEAYDLVRAGKGAVKCLIDGPE</sequence>
<gene>
    <name type="primary">XYL2</name>
    <name type="ORF">PICST_86924</name>
</gene>
<keyword id="KW-0002">3D-structure</keyword>
<keyword id="KW-0119">Carbohydrate metabolism</keyword>
<keyword id="KW-0479">Metal-binding</keyword>
<keyword id="KW-0520">NAD</keyword>
<keyword id="KW-0560">Oxidoreductase</keyword>
<keyword id="KW-1185">Reference proteome</keyword>
<keyword id="KW-0859">Xylose metabolism</keyword>
<keyword id="KW-0862">Zinc</keyword>
<comment type="catalytic activity">
    <reaction>
        <text>xylitol + NAD(+) = D-xylulose + NADH + H(+)</text>
        <dbReference type="Rhea" id="RHEA:20433"/>
        <dbReference type="ChEBI" id="CHEBI:15378"/>
        <dbReference type="ChEBI" id="CHEBI:17140"/>
        <dbReference type="ChEBI" id="CHEBI:17151"/>
        <dbReference type="ChEBI" id="CHEBI:57540"/>
        <dbReference type="ChEBI" id="CHEBI:57945"/>
        <dbReference type="EC" id="1.1.1.9"/>
    </reaction>
</comment>
<comment type="cofactor">
    <cofactor evidence="1">
        <name>Zn(2+)</name>
        <dbReference type="ChEBI" id="CHEBI:29105"/>
    </cofactor>
    <text evidence="1">Binds 1 zinc ion per subunit.</text>
</comment>
<comment type="pathway">
    <text>Carbohydrate degradation; L-arabinose degradation via L-arabinitol; D-xylulose 5-phosphate from L-arabinose (fungal route): step 4/5.</text>
</comment>
<comment type="induction">
    <text>By xylose. Repressed by glucose.</text>
</comment>
<comment type="similarity">
    <text evidence="3">Belongs to the zinc-containing alcohol dehydrogenase family.</text>
</comment>